<evidence type="ECO:0000250" key="1">
    <source>
        <dbReference type="UniProtKB" id="Q9LZR3"/>
    </source>
</evidence>
<evidence type="ECO:0000255" key="2"/>
<evidence type="ECO:0000303" key="3">
    <source>
    </source>
</evidence>
<evidence type="ECO:0000305" key="4"/>
<dbReference type="EC" id="2.4.1.32" evidence="1"/>
<dbReference type="EMBL" id="AC005990">
    <property type="protein sequence ID" value="AAC98005.1"/>
    <property type="status" value="ALT_SEQ"/>
    <property type="molecule type" value="Genomic_DNA"/>
</dbReference>
<dbReference type="EMBL" id="AC007945">
    <property type="protein sequence ID" value="AAF79586.1"/>
    <property type="molecule type" value="Genomic_DNA"/>
</dbReference>
<dbReference type="EMBL" id="CP002684">
    <property type="protein sequence ID" value="AEE30391.1"/>
    <property type="molecule type" value="Genomic_DNA"/>
</dbReference>
<dbReference type="EMBL" id="CP002684">
    <property type="protein sequence ID" value="AEE30392.1"/>
    <property type="molecule type" value="Genomic_DNA"/>
</dbReference>
<dbReference type="EMBL" id="CP002684">
    <property type="protein sequence ID" value="AEE30393.1"/>
    <property type="molecule type" value="Genomic_DNA"/>
</dbReference>
<dbReference type="EMBL" id="AY099769">
    <property type="protein sequence ID" value="AAM20620.1"/>
    <property type="molecule type" value="mRNA"/>
</dbReference>
<dbReference type="EMBL" id="BT000203">
    <property type="protein sequence ID" value="AAN15522.1"/>
    <property type="molecule type" value="mRNA"/>
</dbReference>
<dbReference type="PIR" id="D86368">
    <property type="entry name" value="D86368"/>
</dbReference>
<dbReference type="RefSeq" id="NP_001031084.1">
    <molecule id="Q9LQC9-2"/>
    <property type="nucleotide sequence ID" value="NM_001036007.2"/>
</dbReference>
<dbReference type="RefSeq" id="NP_173762.4">
    <molecule id="Q9LQC9-1"/>
    <property type="nucleotide sequence ID" value="NM_102197.5"/>
</dbReference>
<dbReference type="RefSeq" id="NP_850952.1">
    <molecule id="Q9LQC9-1"/>
    <property type="nucleotide sequence ID" value="NM_180621.3"/>
</dbReference>
<dbReference type="FunCoup" id="Q9LQC9">
    <property type="interactions" value="18"/>
</dbReference>
<dbReference type="STRING" id="3702.Q9LQC9"/>
<dbReference type="CAZy" id="GT2">
    <property type="family name" value="Glycosyltransferase Family 2"/>
</dbReference>
<dbReference type="PaxDb" id="3702-AT1G23480.2"/>
<dbReference type="ProteomicsDB" id="224423">
    <molecule id="Q9LQC9-1"/>
</dbReference>
<dbReference type="EnsemblPlants" id="AT1G23480.1">
    <molecule id="Q9LQC9-1"/>
    <property type="protein sequence ID" value="AT1G23480.1"/>
    <property type="gene ID" value="AT1G23480"/>
</dbReference>
<dbReference type="EnsemblPlants" id="AT1G23480.2">
    <molecule id="Q9LQC9-1"/>
    <property type="protein sequence ID" value="AT1G23480.2"/>
    <property type="gene ID" value="AT1G23480"/>
</dbReference>
<dbReference type="EnsemblPlants" id="AT1G23480.3">
    <molecule id="Q9LQC9-2"/>
    <property type="protein sequence ID" value="AT1G23480.3"/>
    <property type="gene ID" value="AT1G23480"/>
</dbReference>
<dbReference type="GeneID" id="838956"/>
<dbReference type="Gramene" id="AT1G23480.1">
    <molecule id="Q9LQC9-1"/>
    <property type="protein sequence ID" value="AT1G23480.1"/>
    <property type="gene ID" value="AT1G23480"/>
</dbReference>
<dbReference type="Gramene" id="AT1G23480.2">
    <molecule id="Q9LQC9-1"/>
    <property type="protein sequence ID" value="AT1G23480.2"/>
    <property type="gene ID" value="AT1G23480"/>
</dbReference>
<dbReference type="Gramene" id="AT1G23480.3">
    <molecule id="Q9LQC9-2"/>
    <property type="protein sequence ID" value="AT1G23480.3"/>
    <property type="gene ID" value="AT1G23480"/>
</dbReference>
<dbReference type="KEGG" id="ath:AT1G23480"/>
<dbReference type="Araport" id="AT1G23480"/>
<dbReference type="TAIR" id="AT1G23480">
    <property type="gene designation" value="CSLA03"/>
</dbReference>
<dbReference type="eggNOG" id="ENOG502QR7J">
    <property type="taxonomic scope" value="Eukaryota"/>
</dbReference>
<dbReference type="InParanoid" id="Q9LQC9"/>
<dbReference type="OMA" id="QTRIFVF"/>
<dbReference type="OrthoDB" id="72851at2759"/>
<dbReference type="PhylomeDB" id="Q9LQC9"/>
<dbReference type="BioCyc" id="ARA:AT1G23480-MONOMER"/>
<dbReference type="PRO" id="PR:Q9LQC9"/>
<dbReference type="Proteomes" id="UP000006548">
    <property type="component" value="Chromosome 1"/>
</dbReference>
<dbReference type="ExpressionAtlas" id="Q9LQC9">
    <property type="expression patterns" value="baseline and differential"/>
</dbReference>
<dbReference type="GO" id="GO:0000139">
    <property type="term" value="C:Golgi membrane"/>
    <property type="evidence" value="ECO:0007669"/>
    <property type="project" value="UniProtKB-SubCell"/>
</dbReference>
<dbReference type="GO" id="GO:0047259">
    <property type="term" value="F:glucomannan 4-beta-mannosyltransferase activity"/>
    <property type="evidence" value="ECO:0007669"/>
    <property type="project" value="UniProtKB-EC"/>
</dbReference>
<dbReference type="GO" id="GO:0071555">
    <property type="term" value="P:cell wall organization"/>
    <property type="evidence" value="ECO:0007669"/>
    <property type="project" value="UniProtKB-KW"/>
</dbReference>
<dbReference type="CDD" id="cd06437">
    <property type="entry name" value="CESA_CaSu_A2"/>
    <property type="match status" value="1"/>
</dbReference>
<dbReference type="FunFam" id="3.90.550.10:FF:000015">
    <property type="entry name" value="Glucomannan 4-beta-mannosyltransferase 9"/>
    <property type="match status" value="1"/>
</dbReference>
<dbReference type="Gene3D" id="3.90.550.10">
    <property type="entry name" value="Spore Coat Polysaccharide Biosynthesis Protein SpsA, Chain A"/>
    <property type="match status" value="1"/>
</dbReference>
<dbReference type="InterPro" id="IPR001173">
    <property type="entry name" value="Glyco_trans_2-like"/>
</dbReference>
<dbReference type="InterPro" id="IPR029044">
    <property type="entry name" value="Nucleotide-diphossugar_trans"/>
</dbReference>
<dbReference type="PANTHER" id="PTHR32044:SF21">
    <property type="entry name" value="GLUCOMANNAN 4-BETA-MANNOSYLTRANSFERASE 3-RELATED"/>
    <property type="match status" value="1"/>
</dbReference>
<dbReference type="PANTHER" id="PTHR32044">
    <property type="entry name" value="GLUCOMANNAN 4-BETA-MANNOSYLTRANSFERASE 9"/>
    <property type="match status" value="1"/>
</dbReference>
<dbReference type="Pfam" id="PF13632">
    <property type="entry name" value="Glyco_trans_2_3"/>
    <property type="match status" value="1"/>
</dbReference>
<dbReference type="SUPFAM" id="SSF53448">
    <property type="entry name" value="Nucleotide-diphospho-sugar transferases"/>
    <property type="match status" value="1"/>
</dbReference>
<organism>
    <name type="scientific">Arabidopsis thaliana</name>
    <name type="common">Mouse-ear cress</name>
    <dbReference type="NCBI Taxonomy" id="3702"/>
    <lineage>
        <taxon>Eukaryota</taxon>
        <taxon>Viridiplantae</taxon>
        <taxon>Streptophyta</taxon>
        <taxon>Embryophyta</taxon>
        <taxon>Tracheophyta</taxon>
        <taxon>Spermatophyta</taxon>
        <taxon>Magnoliopsida</taxon>
        <taxon>eudicotyledons</taxon>
        <taxon>Gunneridae</taxon>
        <taxon>Pentapetalae</taxon>
        <taxon>rosids</taxon>
        <taxon>malvids</taxon>
        <taxon>Brassicales</taxon>
        <taxon>Brassicaceae</taxon>
        <taxon>Camelineae</taxon>
        <taxon>Arabidopsis</taxon>
    </lineage>
</organism>
<feature type="chain" id="PRO_0000319328" description="Probable glucomannan 4-beta-mannosyltransferase 3">
    <location>
        <begin position="1"/>
        <end position="556"/>
    </location>
</feature>
<feature type="transmembrane region" description="Helical" evidence="2">
    <location>
        <begin position="56"/>
        <end position="76"/>
    </location>
</feature>
<feature type="transmembrane region" description="Helical" evidence="2">
    <location>
        <begin position="391"/>
        <end position="411"/>
    </location>
</feature>
<feature type="transmembrane region" description="Helical" evidence="2">
    <location>
        <begin position="428"/>
        <end position="448"/>
    </location>
</feature>
<feature type="transmembrane region" description="Helical" evidence="2">
    <location>
        <begin position="509"/>
        <end position="529"/>
    </location>
</feature>
<feature type="transmembrane region" description="Helical" evidence="2">
    <location>
        <begin position="530"/>
        <end position="550"/>
    </location>
</feature>
<feature type="active site" evidence="2">
    <location>
        <position position="159"/>
    </location>
</feature>
<feature type="active site" evidence="2">
    <location>
        <position position="312"/>
    </location>
</feature>
<feature type="binding site" evidence="2">
    <location>
        <position position="218"/>
    </location>
    <ligand>
        <name>substrate</name>
    </ligand>
</feature>
<feature type="binding site" evidence="2">
    <location>
        <position position="220"/>
    </location>
    <ligand>
        <name>substrate</name>
    </ligand>
</feature>
<feature type="splice variant" id="VSP_031472" description="In isoform 2." evidence="4">
    <location>
        <begin position="1"/>
        <end position="72"/>
    </location>
</feature>
<keyword id="KW-0025">Alternative splicing</keyword>
<keyword id="KW-0961">Cell wall biogenesis/degradation</keyword>
<keyword id="KW-0328">Glycosyltransferase</keyword>
<keyword id="KW-0333">Golgi apparatus</keyword>
<keyword id="KW-0472">Membrane</keyword>
<keyword id="KW-1185">Reference proteome</keyword>
<keyword id="KW-0808">Transferase</keyword>
<keyword id="KW-0812">Transmembrane</keyword>
<keyword id="KW-1133">Transmembrane helix</keyword>
<accession>Q9LQC9</accession>
<accession>Q3ED64</accession>
<accession>Q9ZUE5</accession>
<comment type="function">
    <text evidence="1">Probable mannan synthase which consists of a 4-beta-mannosyltransferase activity on mannan using GDP-mannose. The beta-1,4-mannan product is the backbone for galactomannan synthesis by galactomannan galactosyltransferase. Galactomannan is a noncellulosic polysaccharides of plant cell wall.</text>
</comment>
<comment type="catalytic activity">
    <reaction evidence="1">
        <text>GDP-mannose + (glucomannan)n = GDP + (glucomannan)n+1.</text>
        <dbReference type="EC" id="2.4.1.32"/>
    </reaction>
</comment>
<comment type="subcellular location">
    <subcellularLocation>
        <location evidence="4">Golgi apparatus membrane</location>
        <topology evidence="4">Multi-pass membrane protein</topology>
    </subcellularLocation>
</comment>
<comment type="alternative products">
    <event type="alternative splicing"/>
    <isoform>
        <id>Q9LQC9-1</id>
        <name>1</name>
        <sequence type="displayed"/>
    </isoform>
    <isoform>
        <id>Q9LQC9-2</id>
        <name>2</name>
        <sequence type="described" ref="VSP_031472"/>
    </isoform>
</comment>
<comment type="similarity">
    <text evidence="4">Belongs to the glycosyltransferase 2 family. Plant cellulose synthase-like A subfamily.</text>
</comment>
<comment type="sequence caution" evidence="4">
    <conflict type="erroneous gene model prediction">
        <sequence resource="EMBL-CDS" id="AAC98005"/>
    </conflict>
</comment>
<gene>
    <name evidence="3" type="primary">CSLA3</name>
    <name type="ordered locus">At1g23480</name>
    <name type="ORF">F28C11.11</name>
    <name type="ORF">F5O8.4</name>
</gene>
<reference key="1">
    <citation type="journal article" date="2000" name="Nature">
        <title>Sequence and analysis of chromosome 1 of the plant Arabidopsis thaliana.</title>
        <authorList>
            <person name="Theologis A."/>
            <person name="Ecker J.R."/>
            <person name="Palm C.J."/>
            <person name="Federspiel N.A."/>
            <person name="Kaul S."/>
            <person name="White O."/>
            <person name="Alonso J."/>
            <person name="Altafi H."/>
            <person name="Araujo R."/>
            <person name="Bowman C.L."/>
            <person name="Brooks S.Y."/>
            <person name="Buehler E."/>
            <person name="Chan A."/>
            <person name="Chao Q."/>
            <person name="Chen H."/>
            <person name="Cheuk R.F."/>
            <person name="Chin C.W."/>
            <person name="Chung M.K."/>
            <person name="Conn L."/>
            <person name="Conway A.B."/>
            <person name="Conway A.R."/>
            <person name="Creasy T.H."/>
            <person name="Dewar K."/>
            <person name="Dunn P."/>
            <person name="Etgu P."/>
            <person name="Feldblyum T.V."/>
            <person name="Feng J.-D."/>
            <person name="Fong B."/>
            <person name="Fujii C.Y."/>
            <person name="Gill J.E."/>
            <person name="Goldsmith A.D."/>
            <person name="Haas B."/>
            <person name="Hansen N.F."/>
            <person name="Hughes B."/>
            <person name="Huizar L."/>
            <person name="Hunter J.L."/>
            <person name="Jenkins J."/>
            <person name="Johnson-Hopson C."/>
            <person name="Khan S."/>
            <person name="Khaykin E."/>
            <person name="Kim C.J."/>
            <person name="Koo H.L."/>
            <person name="Kremenetskaia I."/>
            <person name="Kurtz D.B."/>
            <person name="Kwan A."/>
            <person name="Lam B."/>
            <person name="Langin-Hooper S."/>
            <person name="Lee A."/>
            <person name="Lee J.M."/>
            <person name="Lenz C.A."/>
            <person name="Li J.H."/>
            <person name="Li Y.-P."/>
            <person name="Lin X."/>
            <person name="Liu S.X."/>
            <person name="Liu Z.A."/>
            <person name="Luros J.S."/>
            <person name="Maiti R."/>
            <person name="Marziali A."/>
            <person name="Militscher J."/>
            <person name="Miranda M."/>
            <person name="Nguyen M."/>
            <person name="Nierman W.C."/>
            <person name="Osborne B.I."/>
            <person name="Pai G."/>
            <person name="Peterson J."/>
            <person name="Pham P.K."/>
            <person name="Rizzo M."/>
            <person name="Rooney T."/>
            <person name="Rowley D."/>
            <person name="Sakano H."/>
            <person name="Salzberg S.L."/>
            <person name="Schwartz J.R."/>
            <person name="Shinn P."/>
            <person name="Southwick A.M."/>
            <person name="Sun H."/>
            <person name="Tallon L.J."/>
            <person name="Tambunga G."/>
            <person name="Toriumi M.J."/>
            <person name="Town C.D."/>
            <person name="Utterback T."/>
            <person name="Van Aken S."/>
            <person name="Vaysberg M."/>
            <person name="Vysotskaia V.S."/>
            <person name="Walker M."/>
            <person name="Wu D."/>
            <person name="Yu G."/>
            <person name="Fraser C.M."/>
            <person name="Venter J.C."/>
            <person name="Davis R.W."/>
        </authorList>
    </citation>
    <scope>NUCLEOTIDE SEQUENCE [LARGE SCALE GENOMIC DNA]</scope>
    <source>
        <strain>cv. Columbia</strain>
    </source>
</reference>
<reference key="2">
    <citation type="journal article" date="2017" name="Plant J.">
        <title>Araport11: a complete reannotation of the Arabidopsis thaliana reference genome.</title>
        <authorList>
            <person name="Cheng C.Y."/>
            <person name="Krishnakumar V."/>
            <person name="Chan A.P."/>
            <person name="Thibaud-Nissen F."/>
            <person name="Schobel S."/>
            <person name="Town C.D."/>
        </authorList>
    </citation>
    <scope>GENOME REANNOTATION</scope>
    <source>
        <strain>cv. Columbia</strain>
    </source>
</reference>
<reference key="3">
    <citation type="journal article" date="2003" name="Science">
        <title>Empirical analysis of transcriptional activity in the Arabidopsis genome.</title>
        <authorList>
            <person name="Yamada K."/>
            <person name="Lim J."/>
            <person name="Dale J.M."/>
            <person name="Chen H."/>
            <person name="Shinn P."/>
            <person name="Palm C.J."/>
            <person name="Southwick A.M."/>
            <person name="Wu H.C."/>
            <person name="Kim C.J."/>
            <person name="Nguyen M."/>
            <person name="Pham P.K."/>
            <person name="Cheuk R.F."/>
            <person name="Karlin-Newmann G."/>
            <person name="Liu S.X."/>
            <person name="Lam B."/>
            <person name="Sakano H."/>
            <person name="Wu T."/>
            <person name="Yu G."/>
            <person name="Miranda M."/>
            <person name="Quach H.L."/>
            <person name="Tripp M."/>
            <person name="Chang C.H."/>
            <person name="Lee J.M."/>
            <person name="Toriumi M.J."/>
            <person name="Chan M.M."/>
            <person name="Tang C.C."/>
            <person name="Onodera C.S."/>
            <person name="Deng J.M."/>
            <person name="Akiyama K."/>
            <person name="Ansari Y."/>
            <person name="Arakawa T."/>
            <person name="Banh J."/>
            <person name="Banno F."/>
            <person name="Bowser L."/>
            <person name="Brooks S.Y."/>
            <person name="Carninci P."/>
            <person name="Chao Q."/>
            <person name="Choy N."/>
            <person name="Enju A."/>
            <person name="Goldsmith A.D."/>
            <person name="Gurjal M."/>
            <person name="Hansen N.F."/>
            <person name="Hayashizaki Y."/>
            <person name="Johnson-Hopson C."/>
            <person name="Hsuan V.W."/>
            <person name="Iida K."/>
            <person name="Karnes M."/>
            <person name="Khan S."/>
            <person name="Koesema E."/>
            <person name="Ishida J."/>
            <person name="Jiang P.X."/>
            <person name="Jones T."/>
            <person name="Kawai J."/>
            <person name="Kamiya A."/>
            <person name="Meyers C."/>
            <person name="Nakajima M."/>
            <person name="Narusaka M."/>
            <person name="Seki M."/>
            <person name="Sakurai T."/>
            <person name="Satou M."/>
            <person name="Tamse R."/>
            <person name="Vaysberg M."/>
            <person name="Wallender E.K."/>
            <person name="Wong C."/>
            <person name="Yamamura Y."/>
            <person name="Yuan S."/>
            <person name="Shinozaki K."/>
            <person name="Davis R.W."/>
            <person name="Theologis A."/>
            <person name="Ecker J.R."/>
        </authorList>
    </citation>
    <scope>NUCLEOTIDE SEQUENCE [LARGE SCALE MRNA] (ISOFORM 1)</scope>
    <source>
        <strain>cv. Columbia</strain>
    </source>
</reference>
<reference key="4">
    <citation type="journal article" date="2000" name="Plant Physiol.">
        <title>The cellulose synthase superfamily.</title>
        <authorList>
            <person name="Richmond T.A."/>
            <person name="Somerville C.R."/>
        </authorList>
    </citation>
    <scope>GENE FAMILY</scope>
    <scope>NOMENCLATURE</scope>
</reference>
<protein>
    <recommendedName>
        <fullName evidence="4">Probable glucomannan 4-beta-mannosyltransferase 3</fullName>
        <ecNumber evidence="1">2.4.1.32</ecNumber>
    </recommendedName>
    <alternativeName>
        <fullName evidence="3">Cellulose synthase-like protein A3</fullName>
        <shortName evidence="3">AtCslA3</shortName>
    </alternativeName>
    <alternativeName>
        <fullName evidence="4">Glucomannan synthase</fullName>
    </alternativeName>
    <alternativeName>
        <fullName evidence="4">Mannan synthase 3</fullName>
    </alternativeName>
</protein>
<sequence>MSPFLKFFLFLYDYLSPSSFFLVQRNTLGASLDTTDGVVRSGIIGEIIYIWKQTRIFVFIPILKCLVTICLVMSLLLFIERVYMSIVVVFVKLLRRTPEKVHKWEPINDDDLELANTNYPMVLIQIPMYNEKEVCQLSIGAACRLSWPLDRMIVQVLDDSTDPASKELVNAECDKWARKGINIMSEIRDNRIGYKAGALKAGMMHNYVKQCEFVAIFDADFQPDPDFLERTIPFLIHNHEISLVQCRWKFVNANECLMTRMQEMSLNYHFVAEQESGSSIHAFFGFNGTAGVWRIAALNEAGGWKDRTTVEDMDLAVRACLHGWKFVYVHDVEVKNELPSTFKAYRFQQHRWSCGPANLWRKMTMEILQNKKVSAWKKLYLIYNFFFIRKIVVHIFTFVFYCLILPTTVLFPELQVPKWATVYFPTTITILNAIATPRSLHLLVFWILFENVMSMHRTKATFIGLLEAGRVNEWVVTEKLGDTLKSKLIGKATTKLYTRFGQRLNWRELVVGLYIFFCGCYDFAYGGSYFYVYLFLQSCAFFVAGVGYIGTFVPTV</sequence>
<proteinExistence type="evidence at transcript level"/>
<name>CSLA3_ARATH</name>